<protein>
    <recommendedName>
        <fullName evidence="1">7-cyano-7-deazaguanine synthase</fullName>
        <ecNumber evidence="1">6.3.4.20</ecNumber>
    </recommendedName>
    <alternativeName>
        <fullName evidence="1">7-cyano-7-carbaguanine synthase</fullName>
    </alternativeName>
    <alternativeName>
        <fullName evidence="1">Archaeosine biosynthesis protein QueC</fullName>
    </alternativeName>
    <alternativeName>
        <fullName evidence="1">PreQ(0) synthase</fullName>
    </alternativeName>
</protein>
<organism>
    <name type="scientific">Pyrococcus abyssi (strain GE5 / Orsay)</name>
    <dbReference type="NCBI Taxonomy" id="272844"/>
    <lineage>
        <taxon>Archaea</taxon>
        <taxon>Methanobacteriati</taxon>
        <taxon>Methanobacteriota</taxon>
        <taxon>Thermococci</taxon>
        <taxon>Thermococcales</taxon>
        <taxon>Thermococcaceae</taxon>
        <taxon>Pyrococcus</taxon>
    </lineage>
</organism>
<feature type="chain" id="PRO_0000246985" description="7-cyano-7-deazaguanine synthase">
    <location>
        <begin position="1"/>
        <end position="239"/>
    </location>
</feature>
<feature type="binding site" evidence="1">
    <location>
        <begin position="8"/>
        <end position="18"/>
    </location>
    <ligand>
        <name>ATP</name>
        <dbReference type="ChEBI" id="CHEBI:30616"/>
    </ligand>
</feature>
<feature type="binding site" evidence="1">
    <location>
        <position position="194"/>
    </location>
    <ligand>
        <name>Zn(2+)</name>
        <dbReference type="ChEBI" id="CHEBI:29105"/>
    </ligand>
</feature>
<feature type="binding site" evidence="1">
    <location>
        <position position="209"/>
    </location>
    <ligand>
        <name>Zn(2+)</name>
        <dbReference type="ChEBI" id="CHEBI:29105"/>
    </ligand>
</feature>
<feature type="binding site" evidence="1">
    <location>
        <position position="212"/>
    </location>
    <ligand>
        <name>Zn(2+)</name>
        <dbReference type="ChEBI" id="CHEBI:29105"/>
    </ligand>
</feature>
<feature type="binding site" evidence="1">
    <location>
        <position position="215"/>
    </location>
    <ligand>
        <name>Zn(2+)</name>
        <dbReference type="ChEBI" id="CHEBI:29105"/>
    </ligand>
</feature>
<sequence length="239" mass="26778">MRRAVVLFSGGLDSTASLYWALKHYDEVIMLTINYGSQEERVTNKVAEFFSRELNVPLKIVKIDFLHEFSKIAGSKLVEGNVPEVTARELEDFEKAKETARSVWIPARNFVLIGVAASLLDALGGGDIIVGFNKEEGETFPDNTKEFVDRINSALKYATMNEVRVVAPLIELDKKGIARLLKELNAKYEYSNSCYNPQGFTEDGKPIHCGRCESCVRRHRGLIEGIGEDKTVYLVTPKV</sequence>
<accession>Q9V2I3</accession>
<accession>G8ZFS6</accession>
<comment type="function">
    <text evidence="1">Catalyzes the ATP-dependent conversion of 7-carboxy-7-deazaguanine (CDG) to 7-cyano-7-deazaguanine (preQ(0)).</text>
</comment>
<comment type="catalytic activity">
    <reaction evidence="1">
        <text>7-carboxy-7-deazaguanine + NH4(+) + ATP = 7-cyano-7-deazaguanine + ADP + phosphate + H2O + H(+)</text>
        <dbReference type="Rhea" id="RHEA:27982"/>
        <dbReference type="ChEBI" id="CHEBI:15377"/>
        <dbReference type="ChEBI" id="CHEBI:15378"/>
        <dbReference type="ChEBI" id="CHEBI:28938"/>
        <dbReference type="ChEBI" id="CHEBI:30616"/>
        <dbReference type="ChEBI" id="CHEBI:43474"/>
        <dbReference type="ChEBI" id="CHEBI:45075"/>
        <dbReference type="ChEBI" id="CHEBI:61036"/>
        <dbReference type="ChEBI" id="CHEBI:456216"/>
        <dbReference type="EC" id="6.3.4.20"/>
    </reaction>
</comment>
<comment type="pathway">
    <text evidence="1">Purine metabolism; 7-cyano-7-deazaguanine biosynthesis.</text>
</comment>
<comment type="similarity">
    <text evidence="1">Belongs to the QueC family.</text>
</comment>
<keyword id="KW-0067">ATP-binding</keyword>
<keyword id="KW-0436">Ligase</keyword>
<keyword id="KW-0479">Metal-binding</keyword>
<keyword id="KW-0547">Nucleotide-binding</keyword>
<keyword id="KW-0862">Zinc</keyword>
<dbReference type="EC" id="6.3.4.20" evidence="1"/>
<dbReference type="EMBL" id="AJ248283">
    <property type="protein sequence ID" value="CAB49015.1"/>
    <property type="molecule type" value="Genomic_DNA"/>
</dbReference>
<dbReference type="EMBL" id="HE613800">
    <property type="protein sequence ID" value="CCE69467.1"/>
    <property type="molecule type" value="Genomic_DNA"/>
</dbReference>
<dbReference type="PIR" id="H75195">
    <property type="entry name" value="H75195"/>
</dbReference>
<dbReference type="RefSeq" id="WP_010867216.1">
    <property type="nucleotide sequence ID" value="NC_000868.1"/>
</dbReference>
<dbReference type="SMR" id="Q9V2I3"/>
<dbReference type="STRING" id="272844.PAB2286"/>
<dbReference type="KEGG" id="pab:PAB2286"/>
<dbReference type="PATRIC" id="fig|272844.11.peg.105"/>
<dbReference type="eggNOG" id="arCOG00039">
    <property type="taxonomic scope" value="Archaea"/>
</dbReference>
<dbReference type="HOGENOM" id="CLU_081854_1_1_2"/>
<dbReference type="OrthoDB" id="6532at2157"/>
<dbReference type="PhylomeDB" id="Q9V2I3"/>
<dbReference type="UniPathway" id="UPA00391"/>
<dbReference type="Proteomes" id="UP000000810">
    <property type="component" value="Chromosome"/>
</dbReference>
<dbReference type="Proteomes" id="UP000009139">
    <property type="component" value="Chromosome"/>
</dbReference>
<dbReference type="GO" id="GO:0005524">
    <property type="term" value="F:ATP binding"/>
    <property type="evidence" value="ECO:0007669"/>
    <property type="project" value="UniProtKB-UniRule"/>
</dbReference>
<dbReference type="GO" id="GO:0016879">
    <property type="term" value="F:ligase activity, forming carbon-nitrogen bonds"/>
    <property type="evidence" value="ECO:0007669"/>
    <property type="project" value="UniProtKB-UniRule"/>
</dbReference>
<dbReference type="GO" id="GO:0008270">
    <property type="term" value="F:zinc ion binding"/>
    <property type="evidence" value="ECO:0007669"/>
    <property type="project" value="UniProtKB-UniRule"/>
</dbReference>
<dbReference type="CDD" id="cd01995">
    <property type="entry name" value="QueC-like"/>
    <property type="match status" value="1"/>
</dbReference>
<dbReference type="Gene3D" id="3.40.50.620">
    <property type="entry name" value="HUPs"/>
    <property type="match status" value="1"/>
</dbReference>
<dbReference type="HAMAP" id="MF_01633">
    <property type="entry name" value="QueC"/>
    <property type="match status" value="1"/>
</dbReference>
<dbReference type="InterPro" id="IPR018317">
    <property type="entry name" value="QueC"/>
</dbReference>
<dbReference type="InterPro" id="IPR014729">
    <property type="entry name" value="Rossmann-like_a/b/a_fold"/>
</dbReference>
<dbReference type="NCBIfam" id="TIGR00364">
    <property type="entry name" value="7-cyano-7-deazaguanine synthase QueC"/>
    <property type="match status" value="1"/>
</dbReference>
<dbReference type="PANTHER" id="PTHR42914">
    <property type="entry name" value="7-CYANO-7-DEAZAGUANINE SYNTHASE"/>
    <property type="match status" value="1"/>
</dbReference>
<dbReference type="PANTHER" id="PTHR42914:SF1">
    <property type="entry name" value="7-CYANO-7-DEAZAGUANINE SYNTHASE"/>
    <property type="match status" value="1"/>
</dbReference>
<dbReference type="Pfam" id="PF06508">
    <property type="entry name" value="QueC"/>
    <property type="match status" value="1"/>
</dbReference>
<dbReference type="PIRSF" id="PIRSF006293">
    <property type="entry name" value="ExsB"/>
    <property type="match status" value="1"/>
</dbReference>
<dbReference type="SUPFAM" id="SSF52402">
    <property type="entry name" value="Adenine nucleotide alpha hydrolases-like"/>
    <property type="match status" value="1"/>
</dbReference>
<name>QUEC_PYRAB</name>
<reference key="1">
    <citation type="journal article" date="2003" name="Mol. Microbiol.">
        <title>An integrated analysis of the genome of the hyperthermophilic archaeon Pyrococcus abyssi.</title>
        <authorList>
            <person name="Cohen G.N."/>
            <person name="Barbe V."/>
            <person name="Flament D."/>
            <person name="Galperin M."/>
            <person name="Heilig R."/>
            <person name="Lecompte O."/>
            <person name="Poch O."/>
            <person name="Prieur D."/>
            <person name="Querellou J."/>
            <person name="Ripp R."/>
            <person name="Thierry J.-C."/>
            <person name="Van der Oost J."/>
            <person name="Weissenbach J."/>
            <person name="Zivanovic Y."/>
            <person name="Forterre P."/>
        </authorList>
    </citation>
    <scope>NUCLEOTIDE SEQUENCE [LARGE SCALE GENOMIC DNA]</scope>
    <source>
        <strain>GE5 / Orsay</strain>
    </source>
</reference>
<reference key="2">
    <citation type="journal article" date="2012" name="Curr. Microbiol.">
        <title>Re-annotation of two hyperthermophilic archaea Pyrococcus abyssi GE5 and Pyrococcus furiosus DSM 3638.</title>
        <authorList>
            <person name="Gao J."/>
            <person name="Wang J."/>
        </authorList>
    </citation>
    <scope>GENOME REANNOTATION</scope>
    <source>
        <strain>GE5 / Orsay</strain>
    </source>
</reference>
<evidence type="ECO:0000255" key="1">
    <source>
        <dbReference type="HAMAP-Rule" id="MF_01633"/>
    </source>
</evidence>
<gene>
    <name evidence="1" type="primary">queC</name>
    <name type="ordered locus">PYRAB00920</name>
    <name type="ORF">PAB2286</name>
</gene>
<proteinExistence type="inferred from homology"/>